<keyword id="KW-0150">Chloroplast</keyword>
<keyword id="KW-0472">Membrane</keyword>
<keyword id="KW-0602">Photosynthesis</keyword>
<keyword id="KW-0604">Photosystem II</keyword>
<keyword id="KW-0934">Plastid</keyword>
<keyword id="KW-0674">Reaction center</keyword>
<keyword id="KW-0793">Thylakoid</keyword>
<keyword id="KW-0812">Transmembrane</keyword>
<keyword id="KW-1133">Transmembrane helix</keyword>
<evidence type="ECO:0000255" key="1">
    <source>
        <dbReference type="HAMAP-Rule" id="MF_00644"/>
    </source>
</evidence>
<gene>
    <name evidence="1" type="primary">psbZ</name>
    <name type="synonym">ycf9</name>
</gene>
<name>PSBZ_SKECO</name>
<proteinExistence type="inferred from homology"/>
<feature type="chain" id="PRO_0000217728" description="Photosystem II reaction center protein Z">
    <location>
        <begin position="1"/>
        <end position="61"/>
    </location>
</feature>
<feature type="transmembrane region" description="Helical" evidence="1">
    <location>
        <begin position="5"/>
        <end position="25"/>
    </location>
</feature>
<feature type="transmembrane region" description="Helical" evidence="1">
    <location>
        <begin position="38"/>
        <end position="58"/>
    </location>
</feature>
<geneLocation type="chloroplast"/>
<reference key="1">
    <citation type="journal article" date="1999" name="DNA Seq.">
        <title>Comparison of gene arrangements of chloroplasts between two centric diatoms, Skeletonema costatum and Odontella sinensis.</title>
        <authorList>
            <person name="Tada N."/>
            <person name="Shibata S."/>
            <person name="Otsuka S."/>
            <person name="Namba K."/>
            <person name="Oyaizu H."/>
        </authorList>
    </citation>
    <scope>NUCLEOTIDE SEQUENCE [GENOMIC DNA]</scope>
    <source>
        <strain>NIES-323 / Sk-85w</strain>
    </source>
</reference>
<accession>O96798</accession>
<protein>
    <recommendedName>
        <fullName evidence="1">Photosystem II reaction center protein Z</fullName>
        <shortName evidence="1">PSII-Z</shortName>
    </recommendedName>
</protein>
<sequence length="61" mass="6341">MITALTALLVLISLALVVTVPVALATPGEWESSKDQFNKAFQLWVGLVVAIATADGISSSI</sequence>
<organism>
    <name type="scientific">Skeletonema costatum</name>
    <name type="common">Marine centric diatom</name>
    <name type="synonym">Melosira costata</name>
    <dbReference type="NCBI Taxonomy" id="2843"/>
    <lineage>
        <taxon>Eukaryota</taxon>
        <taxon>Sar</taxon>
        <taxon>Stramenopiles</taxon>
        <taxon>Ochrophyta</taxon>
        <taxon>Bacillariophyta</taxon>
        <taxon>Coscinodiscophyceae</taxon>
        <taxon>Thalassiosirophycidae</taxon>
        <taxon>Thalassiosirales</taxon>
        <taxon>Skeletonemataceae</taxon>
        <taxon>Skeletonema</taxon>
    </lineage>
</organism>
<dbReference type="EMBL" id="AJ132263">
    <property type="protein sequence ID" value="CAA10619.1"/>
    <property type="molecule type" value="Genomic_DNA"/>
</dbReference>
<dbReference type="RefSeq" id="YP_010201193.1">
    <property type="nucleotide sequence ID" value="NC_058703.1"/>
</dbReference>
<dbReference type="SMR" id="O96798"/>
<dbReference type="GeneID" id="68638405"/>
<dbReference type="GO" id="GO:0009535">
    <property type="term" value="C:chloroplast thylakoid membrane"/>
    <property type="evidence" value="ECO:0007669"/>
    <property type="project" value="UniProtKB-SubCell"/>
</dbReference>
<dbReference type="GO" id="GO:0009539">
    <property type="term" value="C:photosystem II reaction center"/>
    <property type="evidence" value="ECO:0007669"/>
    <property type="project" value="InterPro"/>
</dbReference>
<dbReference type="GO" id="GO:0015979">
    <property type="term" value="P:photosynthesis"/>
    <property type="evidence" value="ECO:0007669"/>
    <property type="project" value="UniProtKB-UniRule"/>
</dbReference>
<dbReference type="GO" id="GO:0042549">
    <property type="term" value="P:photosystem II stabilization"/>
    <property type="evidence" value="ECO:0007669"/>
    <property type="project" value="InterPro"/>
</dbReference>
<dbReference type="Gene3D" id="1.10.287.740">
    <property type="entry name" value="Photosystem II PsbZ, reaction centre"/>
    <property type="match status" value="1"/>
</dbReference>
<dbReference type="HAMAP" id="MF_00644">
    <property type="entry name" value="PSII_PsbZ"/>
    <property type="match status" value="1"/>
</dbReference>
<dbReference type="InterPro" id="IPR002644">
    <property type="entry name" value="PSII_PsbZ"/>
</dbReference>
<dbReference type="InterPro" id="IPR036512">
    <property type="entry name" value="PSII_PsbZ_sf"/>
</dbReference>
<dbReference type="NCBIfam" id="TIGR03043">
    <property type="entry name" value="PS_II_psbZ"/>
    <property type="match status" value="1"/>
</dbReference>
<dbReference type="PANTHER" id="PTHR34971">
    <property type="entry name" value="PHOTOSYSTEM II REACTION CENTER PROTEIN Z"/>
    <property type="match status" value="1"/>
</dbReference>
<dbReference type="PANTHER" id="PTHR34971:SF2">
    <property type="entry name" value="PHOTOSYSTEM II REACTION CENTER PROTEIN Z"/>
    <property type="match status" value="1"/>
</dbReference>
<dbReference type="Pfam" id="PF01737">
    <property type="entry name" value="Ycf9"/>
    <property type="match status" value="1"/>
</dbReference>
<dbReference type="SUPFAM" id="SSF161055">
    <property type="entry name" value="PsbZ-like"/>
    <property type="match status" value="1"/>
</dbReference>
<comment type="function">
    <text evidence="1">May control the interaction of photosystem II (PSII) cores with the light-harvesting antenna, regulates electron flow through the 2 photosystem reaction centers. PSII is a light-driven water plastoquinone oxidoreductase, using light energy to abstract electrons from H(2)O, generating a proton gradient subsequently used for ATP formation.</text>
</comment>
<comment type="subunit">
    <text evidence="1">PSII is composed of 1 copy each of membrane proteins PsbA, PsbB, PsbC, PsbD, PsbE, PsbF, PsbH, PsbI, PsbJ, PsbK, PsbL, PsbM, PsbT, PsbX, PsbY, PsbZ, Psb30/Ycf12, at least 3 peripheral proteins of the oxygen-evolving complex and a large number of cofactors. It forms dimeric complexes.</text>
</comment>
<comment type="subcellular location">
    <subcellularLocation>
        <location evidence="1">Plastid</location>
        <location evidence="1">Chloroplast thylakoid membrane</location>
        <topology evidence="1">Multi-pass membrane protein</topology>
    </subcellularLocation>
</comment>
<comment type="similarity">
    <text evidence="1">Belongs to the PsbZ family.</text>
</comment>